<organism>
    <name type="scientific">Yersinia pestis bv. Antiqua (strain Angola)</name>
    <dbReference type="NCBI Taxonomy" id="349746"/>
    <lineage>
        <taxon>Bacteria</taxon>
        <taxon>Pseudomonadati</taxon>
        <taxon>Pseudomonadota</taxon>
        <taxon>Gammaproteobacteria</taxon>
        <taxon>Enterobacterales</taxon>
        <taxon>Yersiniaceae</taxon>
        <taxon>Yersinia</taxon>
    </lineage>
</organism>
<gene>
    <name evidence="1" type="primary">lolB</name>
    <name type="ordered locus">YpAngola_A2462</name>
</gene>
<evidence type="ECO:0000255" key="1">
    <source>
        <dbReference type="HAMAP-Rule" id="MF_00233"/>
    </source>
</evidence>
<protein>
    <recommendedName>
        <fullName evidence="1">Outer-membrane lipoprotein LolB</fullName>
    </recommendedName>
</protein>
<feature type="signal peptide" evidence="1">
    <location>
        <begin position="1"/>
        <end position="21"/>
    </location>
</feature>
<feature type="chain" id="PRO_1000100515" description="Outer-membrane lipoprotein LolB">
    <location>
        <begin position="22"/>
        <end position="207"/>
    </location>
</feature>
<feature type="lipid moiety-binding region" description="N-palmitoyl cysteine" evidence="1">
    <location>
        <position position="22"/>
    </location>
</feature>
<feature type="lipid moiety-binding region" description="S-diacylglycerol cysteine" evidence="1">
    <location>
        <position position="22"/>
    </location>
</feature>
<name>LOLB_YERPG</name>
<dbReference type="EMBL" id="CP000901">
    <property type="protein sequence ID" value="ABX88340.1"/>
    <property type="molecule type" value="Genomic_DNA"/>
</dbReference>
<dbReference type="RefSeq" id="WP_002224468.1">
    <property type="nucleotide sequence ID" value="NZ_CP009935.1"/>
</dbReference>
<dbReference type="SMR" id="A9QZ10"/>
<dbReference type="GeneID" id="57976646"/>
<dbReference type="KEGG" id="ypg:YpAngola_A2462"/>
<dbReference type="PATRIC" id="fig|349746.12.peg.3480"/>
<dbReference type="GO" id="GO:0009279">
    <property type="term" value="C:cell outer membrane"/>
    <property type="evidence" value="ECO:0007669"/>
    <property type="project" value="UniProtKB-SubCell"/>
</dbReference>
<dbReference type="GO" id="GO:0044874">
    <property type="term" value="P:lipoprotein localization to outer membrane"/>
    <property type="evidence" value="ECO:0007669"/>
    <property type="project" value="UniProtKB-UniRule"/>
</dbReference>
<dbReference type="GO" id="GO:0015031">
    <property type="term" value="P:protein transport"/>
    <property type="evidence" value="ECO:0007669"/>
    <property type="project" value="UniProtKB-KW"/>
</dbReference>
<dbReference type="CDD" id="cd16326">
    <property type="entry name" value="LolB"/>
    <property type="match status" value="1"/>
</dbReference>
<dbReference type="Gene3D" id="2.50.20.10">
    <property type="entry name" value="Lipoprotein localisation LolA/LolB/LppX"/>
    <property type="match status" value="1"/>
</dbReference>
<dbReference type="HAMAP" id="MF_00233">
    <property type="entry name" value="LolB"/>
    <property type="match status" value="1"/>
</dbReference>
<dbReference type="InterPro" id="IPR029046">
    <property type="entry name" value="LolA/LolB/LppX"/>
</dbReference>
<dbReference type="InterPro" id="IPR004565">
    <property type="entry name" value="OM_lipoprot_LolB"/>
</dbReference>
<dbReference type="NCBIfam" id="TIGR00548">
    <property type="entry name" value="lolB"/>
    <property type="match status" value="1"/>
</dbReference>
<dbReference type="Pfam" id="PF03550">
    <property type="entry name" value="LolB"/>
    <property type="match status" value="1"/>
</dbReference>
<dbReference type="SUPFAM" id="SSF89392">
    <property type="entry name" value="Prokaryotic lipoproteins and lipoprotein localization factors"/>
    <property type="match status" value="1"/>
</dbReference>
<dbReference type="PROSITE" id="PS51257">
    <property type="entry name" value="PROKAR_LIPOPROTEIN"/>
    <property type="match status" value="1"/>
</dbReference>
<sequence length="207" mass="23981">MPMRKRHFYRLLPLASLLLAACTIPVSKGPATSPTSPQWRQHEQQLQQLGQFETRGAFAYLSDKQKVYARFFWQQTSPERYRLLLTNPLGSTELELVVQPGVTQLTDNQGKRYVSDDPQEMIQKLTGMSIPLESLRQWILGLPGDTSDFTLDDKYRLKKLTYQQNGVTWVVDYQEYNTQVTPSLPSRLELNQDGQRIKLKMDSWTIK</sequence>
<keyword id="KW-0998">Cell outer membrane</keyword>
<keyword id="KW-0143">Chaperone</keyword>
<keyword id="KW-0449">Lipoprotein</keyword>
<keyword id="KW-0472">Membrane</keyword>
<keyword id="KW-0564">Palmitate</keyword>
<keyword id="KW-0653">Protein transport</keyword>
<keyword id="KW-0732">Signal</keyword>
<keyword id="KW-0813">Transport</keyword>
<proteinExistence type="inferred from homology"/>
<comment type="function">
    <text evidence="1">Plays a critical role in the incorporation of lipoproteins in the outer membrane after they are released by the LolA protein.</text>
</comment>
<comment type="subunit">
    <text evidence="1">Monomer.</text>
</comment>
<comment type="subcellular location">
    <subcellularLocation>
        <location evidence="1">Cell outer membrane</location>
        <topology evidence="1">Lipid-anchor</topology>
    </subcellularLocation>
</comment>
<comment type="similarity">
    <text evidence="1">Belongs to the LolB family.</text>
</comment>
<accession>A9QZ10</accession>
<reference key="1">
    <citation type="journal article" date="2010" name="J. Bacteriol.">
        <title>Genome sequence of the deep-rooted Yersinia pestis strain Angola reveals new insights into the evolution and pangenome of the plague bacterium.</title>
        <authorList>
            <person name="Eppinger M."/>
            <person name="Worsham P.L."/>
            <person name="Nikolich M.P."/>
            <person name="Riley D.R."/>
            <person name="Sebastian Y."/>
            <person name="Mou S."/>
            <person name="Achtman M."/>
            <person name="Lindler L.E."/>
            <person name="Ravel J."/>
        </authorList>
    </citation>
    <scope>NUCLEOTIDE SEQUENCE [LARGE SCALE GENOMIC DNA]</scope>
    <source>
        <strain>Angola</strain>
    </source>
</reference>